<sequence length="261" mass="29596">MLITISPAKTLDFESPLATTQFTQPELLKYSQQLITECRKLSSSDIASLMKISDKLAGLNAARFGEWQPDFTPDNARQAILAFKGDVYTGMQAAELFTDDDFQFAQQHLRILSGLYGVLRPLDLMQPYRLEMGIKLNNKKGSDLYQFWGNIITETLNNALEAQGDNILVNLASDEYFKSVNPKKLNAEIIKPVFLDEKNGKYKVISFYAKKARGLMSRFIIQERLSDKAQLKEFNLEGYQFNAAESEGNTLVFKRAEHLAK</sequence>
<proteinExistence type="inferred from homology"/>
<protein>
    <recommendedName>
        <fullName evidence="1">UPF0246 protein PMI0005</fullName>
    </recommendedName>
</protein>
<gene>
    <name type="ordered locus">PMI0005</name>
</gene>
<keyword id="KW-1185">Reference proteome</keyword>
<name>Y005_PROMH</name>
<comment type="similarity">
    <text evidence="1">Belongs to the UPF0246 family.</text>
</comment>
<accession>B4F2V1</accession>
<organism>
    <name type="scientific">Proteus mirabilis (strain HI4320)</name>
    <dbReference type="NCBI Taxonomy" id="529507"/>
    <lineage>
        <taxon>Bacteria</taxon>
        <taxon>Pseudomonadati</taxon>
        <taxon>Pseudomonadota</taxon>
        <taxon>Gammaproteobacteria</taxon>
        <taxon>Enterobacterales</taxon>
        <taxon>Morganellaceae</taxon>
        <taxon>Proteus</taxon>
    </lineage>
</organism>
<dbReference type="EMBL" id="AM942759">
    <property type="protein sequence ID" value="CAR40245.1"/>
    <property type="molecule type" value="Genomic_DNA"/>
</dbReference>
<dbReference type="SMR" id="B4F2V1"/>
<dbReference type="EnsemblBacteria" id="CAR40245">
    <property type="protein sequence ID" value="CAR40245"/>
    <property type="gene ID" value="PMI0005"/>
</dbReference>
<dbReference type="GeneID" id="6802073"/>
<dbReference type="KEGG" id="pmr:PMI0005"/>
<dbReference type="eggNOG" id="COG3022">
    <property type="taxonomic scope" value="Bacteria"/>
</dbReference>
<dbReference type="HOGENOM" id="CLU_061989_0_0_6"/>
<dbReference type="Proteomes" id="UP000008319">
    <property type="component" value="Chromosome"/>
</dbReference>
<dbReference type="GO" id="GO:0005829">
    <property type="term" value="C:cytosol"/>
    <property type="evidence" value="ECO:0007669"/>
    <property type="project" value="TreeGrafter"/>
</dbReference>
<dbReference type="GO" id="GO:0033194">
    <property type="term" value="P:response to hydroperoxide"/>
    <property type="evidence" value="ECO:0007669"/>
    <property type="project" value="TreeGrafter"/>
</dbReference>
<dbReference type="HAMAP" id="MF_00652">
    <property type="entry name" value="UPF0246"/>
    <property type="match status" value="1"/>
</dbReference>
<dbReference type="InterPro" id="IPR005583">
    <property type="entry name" value="YaaA"/>
</dbReference>
<dbReference type="NCBIfam" id="NF002541">
    <property type="entry name" value="PRK02101.1-1"/>
    <property type="match status" value="1"/>
</dbReference>
<dbReference type="NCBIfam" id="NF002542">
    <property type="entry name" value="PRK02101.1-3"/>
    <property type="match status" value="1"/>
</dbReference>
<dbReference type="PANTHER" id="PTHR30283:SF4">
    <property type="entry name" value="PEROXIDE STRESS RESISTANCE PROTEIN YAAA"/>
    <property type="match status" value="1"/>
</dbReference>
<dbReference type="PANTHER" id="PTHR30283">
    <property type="entry name" value="PEROXIDE STRESS RESPONSE PROTEIN YAAA"/>
    <property type="match status" value="1"/>
</dbReference>
<dbReference type="Pfam" id="PF03883">
    <property type="entry name" value="H2O2_YaaD"/>
    <property type="match status" value="1"/>
</dbReference>
<feature type="chain" id="PRO_1000131132" description="UPF0246 protein PMI0005">
    <location>
        <begin position="1"/>
        <end position="261"/>
    </location>
</feature>
<evidence type="ECO:0000255" key="1">
    <source>
        <dbReference type="HAMAP-Rule" id="MF_00652"/>
    </source>
</evidence>
<reference key="1">
    <citation type="journal article" date="2008" name="J. Bacteriol.">
        <title>Complete genome sequence of uropathogenic Proteus mirabilis, a master of both adherence and motility.</title>
        <authorList>
            <person name="Pearson M.M."/>
            <person name="Sebaihia M."/>
            <person name="Churcher C."/>
            <person name="Quail M.A."/>
            <person name="Seshasayee A.S."/>
            <person name="Luscombe N.M."/>
            <person name="Abdellah Z."/>
            <person name="Arrosmith C."/>
            <person name="Atkin B."/>
            <person name="Chillingworth T."/>
            <person name="Hauser H."/>
            <person name="Jagels K."/>
            <person name="Moule S."/>
            <person name="Mungall K."/>
            <person name="Norbertczak H."/>
            <person name="Rabbinowitsch E."/>
            <person name="Walker D."/>
            <person name="Whithead S."/>
            <person name="Thomson N.R."/>
            <person name="Rather P.N."/>
            <person name="Parkhill J."/>
            <person name="Mobley H.L.T."/>
        </authorList>
    </citation>
    <scope>NUCLEOTIDE SEQUENCE [LARGE SCALE GENOMIC DNA]</scope>
    <source>
        <strain>HI4320</strain>
    </source>
</reference>